<evidence type="ECO:0000255" key="1">
    <source>
        <dbReference type="HAMAP-Rule" id="MF_01973"/>
    </source>
</evidence>
<evidence type="ECO:0000255" key="2">
    <source>
        <dbReference type="PROSITE-ProRule" id="PRU01122"/>
    </source>
</evidence>
<evidence type="ECO:0000255" key="3">
    <source>
        <dbReference type="PROSITE-ProRule" id="PRU01123"/>
    </source>
</evidence>
<evidence type="ECO:0000256" key="4">
    <source>
        <dbReference type="SAM" id="MobiDB-lite"/>
    </source>
</evidence>
<evidence type="ECO:0000269" key="5">
    <source>
    </source>
</evidence>
<evidence type="ECO:0000305" key="6"/>
<comment type="function">
    <text evidence="1 5">ATP-dependent serine protease that mediates the selective degradation of mutant and abnormal proteins as well as certain short-lived regulatory proteins. Required for cellular homeostasis and for survival from DNA damage and developmental changes induced by stress. Degrades polypeptides processively to yield small peptide fragments that are 5 to 10 amino acids long. Binds to DNA in a double-stranded, site-specific manner (By similarity). Required for wild-type virulence during the initial stages of infection in the mouse model, but not essential for the establishment and maintenance of chronic infection in this host.</text>
</comment>
<comment type="catalytic activity">
    <reaction evidence="1">
        <text>Hydrolysis of proteins in presence of ATP.</text>
        <dbReference type="EC" id="3.4.21.53"/>
    </reaction>
</comment>
<comment type="subunit">
    <text evidence="1">Homohexamer. Organized in a ring with a central cavity.</text>
</comment>
<comment type="subcellular location">
    <subcellularLocation>
        <location evidence="1">Cytoplasm</location>
    </subcellularLocation>
</comment>
<comment type="induction">
    <text evidence="5">By stress conditions (acid shock, heat shock, ethanol and puromycin).</text>
</comment>
<comment type="similarity">
    <text evidence="1">Belongs to the peptidase S16 family.</text>
</comment>
<keyword id="KW-0067">ATP-binding</keyword>
<keyword id="KW-0963">Cytoplasm</keyword>
<keyword id="KW-0378">Hydrolase</keyword>
<keyword id="KW-0547">Nucleotide-binding</keyword>
<keyword id="KW-0645">Protease</keyword>
<keyword id="KW-1185">Reference proteome</keyword>
<keyword id="KW-0720">Serine protease</keyword>
<keyword id="KW-0346">Stress response</keyword>
<protein>
    <recommendedName>
        <fullName evidence="1">Lon protease</fullName>
        <ecNumber evidence="1">3.4.21.53</ecNumber>
    </recommendedName>
    <alternativeName>
        <fullName evidence="1">ATP-dependent protease La</fullName>
    </alternativeName>
</protein>
<gene>
    <name evidence="1" type="primary">lon</name>
    <name type="ordered locus">BAB1_1130</name>
</gene>
<feature type="chain" id="PRO_0000076122" description="Lon protease">
    <location>
        <begin position="1"/>
        <end position="812"/>
    </location>
</feature>
<feature type="domain" description="Lon N-terminal" evidence="3">
    <location>
        <begin position="22"/>
        <end position="215"/>
    </location>
</feature>
<feature type="domain" description="Lon proteolytic" evidence="2">
    <location>
        <begin position="602"/>
        <end position="783"/>
    </location>
</feature>
<feature type="region of interest" description="Disordered" evidence="4">
    <location>
        <begin position="787"/>
        <end position="812"/>
    </location>
</feature>
<feature type="active site" evidence="1">
    <location>
        <position position="689"/>
    </location>
</feature>
<feature type="active site" evidence="1">
    <location>
        <position position="732"/>
    </location>
</feature>
<feature type="binding site" evidence="1">
    <location>
        <begin position="367"/>
        <end position="374"/>
    </location>
    <ligand>
        <name>ATP</name>
        <dbReference type="ChEBI" id="CHEBI:30616"/>
    </ligand>
</feature>
<feature type="sequence conflict" description="In Ref. 1; AAB97420." evidence="6" ref="1">
    <original>R</original>
    <variation>P</variation>
    <location>
        <position position="227"/>
    </location>
</feature>
<reference key="1">
    <citation type="journal article" date="2000" name="Mol. Microbiol.">
        <title>The Brucella abortus Lon functions as a generalized stress response protease and is required for wild-type virulence in BALB/c mice.</title>
        <authorList>
            <person name="Robertson G.T."/>
            <person name="Kovach M.E."/>
            <person name="Allen C.A."/>
            <person name="Ficht T.A."/>
            <person name="Roop R.M. II"/>
        </authorList>
    </citation>
    <scope>NUCLEOTIDE SEQUENCE [GENOMIC DNA]</scope>
    <scope>FUNCTION</scope>
    <scope>INDUCTION</scope>
</reference>
<reference key="2">
    <citation type="journal article" date="2005" name="Infect. Immun.">
        <title>Whole-genome analyses of speciation events in pathogenic Brucellae.</title>
        <authorList>
            <person name="Chain P.S."/>
            <person name="Comerci D.J."/>
            <person name="Tolmasky M.E."/>
            <person name="Larimer F.W."/>
            <person name="Malfatti S.A."/>
            <person name="Vergez L.M."/>
            <person name="Aguero F."/>
            <person name="Land M.L."/>
            <person name="Ugalde R.A."/>
            <person name="Garcia E."/>
        </authorList>
    </citation>
    <scope>NUCLEOTIDE SEQUENCE [LARGE SCALE GENOMIC DNA]</scope>
    <source>
        <strain>2308</strain>
    </source>
</reference>
<dbReference type="EC" id="3.4.21.53" evidence="1"/>
<dbReference type="EMBL" id="AF042348">
    <property type="protein sequence ID" value="AAB97420.1"/>
    <property type="molecule type" value="Genomic_DNA"/>
</dbReference>
<dbReference type="EMBL" id="AM040264">
    <property type="protein sequence ID" value="CAJ11086.1"/>
    <property type="molecule type" value="Genomic_DNA"/>
</dbReference>
<dbReference type="RefSeq" id="WP_002966840.1">
    <property type="nucleotide sequence ID" value="NZ_KN046823.1"/>
</dbReference>
<dbReference type="SMR" id="Q2YPX3"/>
<dbReference type="STRING" id="359391.BAB1_1130"/>
<dbReference type="MEROPS" id="S16.001"/>
<dbReference type="GeneID" id="93016554"/>
<dbReference type="KEGG" id="bmf:BAB1_1130"/>
<dbReference type="PATRIC" id="fig|359391.11.peg.30"/>
<dbReference type="HOGENOM" id="CLU_004109_4_3_5"/>
<dbReference type="PhylomeDB" id="Q2YPX3"/>
<dbReference type="PHI-base" id="PHI:8922"/>
<dbReference type="Proteomes" id="UP000002719">
    <property type="component" value="Chromosome I"/>
</dbReference>
<dbReference type="GO" id="GO:0005737">
    <property type="term" value="C:cytoplasm"/>
    <property type="evidence" value="ECO:0007669"/>
    <property type="project" value="UniProtKB-SubCell"/>
</dbReference>
<dbReference type="GO" id="GO:0005524">
    <property type="term" value="F:ATP binding"/>
    <property type="evidence" value="ECO:0007669"/>
    <property type="project" value="UniProtKB-UniRule"/>
</dbReference>
<dbReference type="GO" id="GO:0016887">
    <property type="term" value="F:ATP hydrolysis activity"/>
    <property type="evidence" value="ECO:0007669"/>
    <property type="project" value="UniProtKB-UniRule"/>
</dbReference>
<dbReference type="GO" id="GO:0004176">
    <property type="term" value="F:ATP-dependent peptidase activity"/>
    <property type="evidence" value="ECO:0007669"/>
    <property type="project" value="UniProtKB-UniRule"/>
</dbReference>
<dbReference type="GO" id="GO:0043565">
    <property type="term" value="F:sequence-specific DNA binding"/>
    <property type="evidence" value="ECO:0007669"/>
    <property type="project" value="UniProtKB-UniRule"/>
</dbReference>
<dbReference type="GO" id="GO:0004252">
    <property type="term" value="F:serine-type endopeptidase activity"/>
    <property type="evidence" value="ECO:0007669"/>
    <property type="project" value="UniProtKB-UniRule"/>
</dbReference>
<dbReference type="GO" id="GO:0034605">
    <property type="term" value="P:cellular response to heat"/>
    <property type="evidence" value="ECO:0007669"/>
    <property type="project" value="UniProtKB-UniRule"/>
</dbReference>
<dbReference type="GO" id="GO:0006515">
    <property type="term" value="P:protein quality control for misfolded or incompletely synthesized proteins"/>
    <property type="evidence" value="ECO:0007669"/>
    <property type="project" value="UniProtKB-UniRule"/>
</dbReference>
<dbReference type="CDD" id="cd19500">
    <property type="entry name" value="RecA-like_Lon"/>
    <property type="match status" value="1"/>
</dbReference>
<dbReference type="FunFam" id="3.30.230.10:FF:000010">
    <property type="entry name" value="Lon protease"/>
    <property type="match status" value="1"/>
</dbReference>
<dbReference type="FunFam" id="1.20.5.5270:FF:000002">
    <property type="entry name" value="Lon protease homolog"/>
    <property type="match status" value="1"/>
</dbReference>
<dbReference type="FunFam" id="3.40.50.300:FF:000021">
    <property type="entry name" value="Lon protease homolog"/>
    <property type="match status" value="1"/>
</dbReference>
<dbReference type="Gene3D" id="1.10.8.60">
    <property type="match status" value="1"/>
</dbReference>
<dbReference type="Gene3D" id="1.20.5.5270">
    <property type="match status" value="1"/>
</dbReference>
<dbReference type="Gene3D" id="1.20.58.1480">
    <property type="match status" value="1"/>
</dbReference>
<dbReference type="Gene3D" id="3.30.230.10">
    <property type="match status" value="1"/>
</dbReference>
<dbReference type="Gene3D" id="2.30.130.40">
    <property type="entry name" value="LON domain-like"/>
    <property type="match status" value="1"/>
</dbReference>
<dbReference type="Gene3D" id="3.40.50.300">
    <property type="entry name" value="P-loop containing nucleotide triphosphate hydrolases"/>
    <property type="match status" value="1"/>
</dbReference>
<dbReference type="HAMAP" id="MF_01973">
    <property type="entry name" value="lon_bact"/>
    <property type="match status" value="1"/>
</dbReference>
<dbReference type="InterPro" id="IPR003593">
    <property type="entry name" value="AAA+_ATPase"/>
</dbReference>
<dbReference type="InterPro" id="IPR003959">
    <property type="entry name" value="ATPase_AAA_core"/>
</dbReference>
<dbReference type="InterPro" id="IPR027543">
    <property type="entry name" value="Lon_bac"/>
</dbReference>
<dbReference type="InterPro" id="IPR004815">
    <property type="entry name" value="Lon_bac/euk-typ"/>
</dbReference>
<dbReference type="InterPro" id="IPR054594">
    <property type="entry name" value="Lon_lid"/>
</dbReference>
<dbReference type="InterPro" id="IPR008269">
    <property type="entry name" value="Lon_proteolytic"/>
</dbReference>
<dbReference type="InterPro" id="IPR027065">
    <property type="entry name" value="Lon_Prtase"/>
</dbReference>
<dbReference type="InterPro" id="IPR003111">
    <property type="entry name" value="Lon_prtase_N"/>
</dbReference>
<dbReference type="InterPro" id="IPR046336">
    <property type="entry name" value="Lon_prtase_N_sf"/>
</dbReference>
<dbReference type="InterPro" id="IPR027417">
    <property type="entry name" value="P-loop_NTPase"/>
</dbReference>
<dbReference type="InterPro" id="IPR008268">
    <property type="entry name" value="Peptidase_S16_AS"/>
</dbReference>
<dbReference type="InterPro" id="IPR015947">
    <property type="entry name" value="PUA-like_sf"/>
</dbReference>
<dbReference type="InterPro" id="IPR020568">
    <property type="entry name" value="Ribosomal_Su5_D2-typ_SF"/>
</dbReference>
<dbReference type="InterPro" id="IPR014721">
    <property type="entry name" value="Ribsml_uS5_D2-typ_fold_subgr"/>
</dbReference>
<dbReference type="NCBIfam" id="TIGR00763">
    <property type="entry name" value="lon"/>
    <property type="match status" value="1"/>
</dbReference>
<dbReference type="NCBIfam" id="NF008053">
    <property type="entry name" value="PRK10787.1"/>
    <property type="match status" value="1"/>
</dbReference>
<dbReference type="PANTHER" id="PTHR10046">
    <property type="entry name" value="ATP DEPENDENT LON PROTEASE FAMILY MEMBER"/>
    <property type="match status" value="1"/>
</dbReference>
<dbReference type="Pfam" id="PF00004">
    <property type="entry name" value="AAA"/>
    <property type="match status" value="1"/>
</dbReference>
<dbReference type="Pfam" id="PF05362">
    <property type="entry name" value="Lon_C"/>
    <property type="match status" value="1"/>
</dbReference>
<dbReference type="Pfam" id="PF22667">
    <property type="entry name" value="Lon_lid"/>
    <property type="match status" value="1"/>
</dbReference>
<dbReference type="Pfam" id="PF02190">
    <property type="entry name" value="LON_substr_bdg"/>
    <property type="match status" value="1"/>
</dbReference>
<dbReference type="PIRSF" id="PIRSF001174">
    <property type="entry name" value="Lon_proteas"/>
    <property type="match status" value="1"/>
</dbReference>
<dbReference type="PRINTS" id="PR00830">
    <property type="entry name" value="ENDOLAPTASE"/>
</dbReference>
<dbReference type="SMART" id="SM00382">
    <property type="entry name" value="AAA"/>
    <property type="match status" value="1"/>
</dbReference>
<dbReference type="SMART" id="SM00464">
    <property type="entry name" value="LON"/>
    <property type="match status" value="1"/>
</dbReference>
<dbReference type="SUPFAM" id="SSF52540">
    <property type="entry name" value="P-loop containing nucleoside triphosphate hydrolases"/>
    <property type="match status" value="1"/>
</dbReference>
<dbReference type="SUPFAM" id="SSF88697">
    <property type="entry name" value="PUA domain-like"/>
    <property type="match status" value="1"/>
</dbReference>
<dbReference type="SUPFAM" id="SSF54211">
    <property type="entry name" value="Ribosomal protein S5 domain 2-like"/>
    <property type="match status" value="1"/>
</dbReference>
<dbReference type="PROSITE" id="PS51787">
    <property type="entry name" value="LON_N"/>
    <property type="match status" value="1"/>
</dbReference>
<dbReference type="PROSITE" id="PS51786">
    <property type="entry name" value="LON_PROTEOLYTIC"/>
    <property type="match status" value="1"/>
</dbReference>
<dbReference type="PROSITE" id="PS01046">
    <property type="entry name" value="LON_SER"/>
    <property type="match status" value="1"/>
</dbReference>
<accession>Q2YPX3</accession>
<accession>O52605</accession>
<accession>Q57D31</accession>
<organism>
    <name type="scientific">Brucella abortus (strain 2308)</name>
    <dbReference type="NCBI Taxonomy" id="359391"/>
    <lineage>
        <taxon>Bacteria</taxon>
        <taxon>Pseudomonadati</taxon>
        <taxon>Pseudomonadota</taxon>
        <taxon>Alphaproteobacteria</taxon>
        <taxon>Hyphomicrobiales</taxon>
        <taxon>Brucellaceae</taxon>
        <taxon>Brucella/Ochrobactrum group</taxon>
        <taxon>Brucella</taxon>
    </lineage>
</organism>
<sequence>MTGIEQKTPVGGSETGGADGLYAVLPLRDIVVFPHMIVPLFVGREKSIRALEEVMGVDKQILLATQKNAADDDPAPDAIYEIGTIANVLQLLKLPDGTVKVLVEGTARAKISKFTDREDYHEAYAAALQEPEEDAVEIEALARSVVPDFENYVKLNKKISPEVVGAASQIDDYSKLADTVASHLAIKIPEKQEMLSVLSVRERLEKALSFMEAEISVLQVEKRIRSRVKRQMEKTQREYYLNEQMKAIQKELGDSEDGRDEVAEIEERITKTKLSKEAREKALAELKKLRSMSPMSAEATVVRNYLDWLLSIPWGKKSKVKQDLNFAQEVLDAEHFGLGKVKERIVEYLAVQARSTKIKGPILCLVGPPGVGKTSLARSIAKATGREYVRMSLGGVRDEAEIRGHRRTYIGSMPGKVIQSMKKAKKSNPLFLLDEIDKMGQDFRGDPSSAMLEVLDPEQNATFMDHYLEVEYDLSNVMFVTTANTMNIPVPLLDRMEIIRIAGYTEDEKLEIAKRHLLPKAIKDHALQPKEFSVTEDALRNVIRHYTREAGVRSLEREVMTLARKAVTEILKTKKKSVKITDKNLSDYLGVEKFRFGQIDGEDQVGVVTGLAWTEVGGELLTIEGVMMPGKGRMTVTGNLRDVMKESISAAASYVRSRAIDFGIEPPLFDKRDIHVHVPEGATPKDGPSAGIAMVTAIVSVLTGIPVRKDIAMTGEVTLRGRVLPIGGLKEKLLATLRGGIKKVLIPEENAKDLAEIPDNVKNNLEIVPVSRVGEVLKHALVRQPEPIEWTEQENPTAVPPVEDEAGASLAH</sequence>
<proteinExistence type="evidence at transcript level"/>
<name>LON_BRUA2</name>